<proteinExistence type="inferred from homology"/>
<accession>B1HZE7</accession>
<evidence type="ECO:0000255" key="1">
    <source>
        <dbReference type="HAMAP-Rule" id="MF_01389"/>
    </source>
</evidence>
<protein>
    <recommendedName>
        <fullName evidence="1">Urease accessory protein UreG</fullName>
    </recommendedName>
</protein>
<name>UREG_LYSSC</name>
<comment type="function">
    <text evidence="1">Facilitates the functional incorporation of the urease nickel metallocenter. This process requires GTP hydrolysis, probably effectuated by UreG.</text>
</comment>
<comment type="subunit">
    <text evidence="1">Homodimer. UreD, UreF and UreG form a complex that acts as a GTP-hydrolysis-dependent molecular chaperone, activating the urease apoprotein by helping to assemble the nickel containing metallocenter of UreC. The UreE protein probably delivers the nickel.</text>
</comment>
<comment type="subcellular location">
    <subcellularLocation>
        <location evidence="1">Cytoplasm</location>
    </subcellularLocation>
</comment>
<comment type="similarity">
    <text evidence="1">Belongs to the SIMIBI class G3E GTPase family. UreG subfamily.</text>
</comment>
<gene>
    <name evidence="1" type="primary">ureG</name>
    <name type="ordered locus">Bsph_2704</name>
</gene>
<dbReference type="EMBL" id="CP000817">
    <property type="protein sequence ID" value="ACA40244.1"/>
    <property type="molecule type" value="Genomic_DNA"/>
</dbReference>
<dbReference type="RefSeq" id="WP_012294330.1">
    <property type="nucleotide sequence ID" value="NC_010382.1"/>
</dbReference>
<dbReference type="SMR" id="B1HZE7"/>
<dbReference type="EnsemblBacteria" id="ACA40244">
    <property type="protein sequence ID" value="ACA40244"/>
    <property type="gene ID" value="Bsph_2704"/>
</dbReference>
<dbReference type="KEGG" id="lsp:Bsph_2704"/>
<dbReference type="HOGENOM" id="CLU_072144_1_0_9"/>
<dbReference type="Proteomes" id="UP000002164">
    <property type="component" value="Chromosome"/>
</dbReference>
<dbReference type="GO" id="GO:0005737">
    <property type="term" value="C:cytoplasm"/>
    <property type="evidence" value="ECO:0007669"/>
    <property type="project" value="UniProtKB-SubCell"/>
</dbReference>
<dbReference type="GO" id="GO:0005525">
    <property type="term" value="F:GTP binding"/>
    <property type="evidence" value="ECO:0007669"/>
    <property type="project" value="UniProtKB-KW"/>
</dbReference>
<dbReference type="GO" id="GO:0003924">
    <property type="term" value="F:GTPase activity"/>
    <property type="evidence" value="ECO:0007669"/>
    <property type="project" value="InterPro"/>
</dbReference>
<dbReference type="GO" id="GO:0016151">
    <property type="term" value="F:nickel cation binding"/>
    <property type="evidence" value="ECO:0007669"/>
    <property type="project" value="UniProtKB-UniRule"/>
</dbReference>
<dbReference type="GO" id="GO:0043419">
    <property type="term" value="P:urea catabolic process"/>
    <property type="evidence" value="ECO:0007669"/>
    <property type="project" value="InterPro"/>
</dbReference>
<dbReference type="CDD" id="cd05540">
    <property type="entry name" value="UreG"/>
    <property type="match status" value="1"/>
</dbReference>
<dbReference type="FunFam" id="3.40.50.300:FF:000208">
    <property type="entry name" value="Urease accessory protein UreG"/>
    <property type="match status" value="1"/>
</dbReference>
<dbReference type="Gene3D" id="3.40.50.300">
    <property type="entry name" value="P-loop containing nucleotide triphosphate hydrolases"/>
    <property type="match status" value="1"/>
</dbReference>
<dbReference type="HAMAP" id="MF_01389">
    <property type="entry name" value="UreG"/>
    <property type="match status" value="1"/>
</dbReference>
<dbReference type="InterPro" id="IPR003495">
    <property type="entry name" value="CobW/HypB/UreG_nucleotide-bd"/>
</dbReference>
<dbReference type="InterPro" id="IPR027417">
    <property type="entry name" value="P-loop_NTPase"/>
</dbReference>
<dbReference type="InterPro" id="IPR004400">
    <property type="entry name" value="UreG"/>
</dbReference>
<dbReference type="NCBIfam" id="TIGR00101">
    <property type="entry name" value="ureG"/>
    <property type="match status" value="1"/>
</dbReference>
<dbReference type="PANTHER" id="PTHR31715">
    <property type="entry name" value="UREASE ACCESSORY PROTEIN G"/>
    <property type="match status" value="1"/>
</dbReference>
<dbReference type="PANTHER" id="PTHR31715:SF0">
    <property type="entry name" value="UREASE ACCESSORY PROTEIN G"/>
    <property type="match status" value="1"/>
</dbReference>
<dbReference type="Pfam" id="PF02492">
    <property type="entry name" value="cobW"/>
    <property type="match status" value="1"/>
</dbReference>
<dbReference type="PIRSF" id="PIRSF005624">
    <property type="entry name" value="Ni-bind_GTPase"/>
    <property type="match status" value="1"/>
</dbReference>
<dbReference type="SUPFAM" id="SSF52540">
    <property type="entry name" value="P-loop containing nucleoside triphosphate hydrolases"/>
    <property type="match status" value="1"/>
</dbReference>
<sequence length="209" mass="22986">MKPIRIGIGGPVGSGKTSLVDQLTRVMHEHYHVAVITNDIYTREDAQYLITNGVLAEERIIGVETGGCPHTAIREDASMNFAAIDDLTKRFKNLDIIFIESGGDNLSATFSPELVHGYIYVIDVAEGQDIPRKGGPALTRSDLLLINKTSLAPHVGVDLDIMDQDVKKMRGGRPYIFADVRSQTNVDKVVEWIQHHMLLEGAEAVDNHG</sequence>
<keyword id="KW-0143">Chaperone</keyword>
<keyword id="KW-0963">Cytoplasm</keyword>
<keyword id="KW-0342">GTP-binding</keyword>
<keyword id="KW-0996">Nickel insertion</keyword>
<keyword id="KW-0547">Nucleotide-binding</keyword>
<organism>
    <name type="scientific">Lysinibacillus sphaericus (strain C3-41)</name>
    <dbReference type="NCBI Taxonomy" id="444177"/>
    <lineage>
        <taxon>Bacteria</taxon>
        <taxon>Bacillati</taxon>
        <taxon>Bacillota</taxon>
        <taxon>Bacilli</taxon>
        <taxon>Bacillales</taxon>
        <taxon>Bacillaceae</taxon>
        <taxon>Lysinibacillus</taxon>
    </lineage>
</organism>
<reference key="1">
    <citation type="journal article" date="2008" name="J. Bacteriol.">
        <title>Complete genome sequence of the mosquitocidal bacterium Bacillus sphaericus C3-41 and comparison with those of closely related Bacillus species.</title>
        <authorList>
            <person name="Hu X."/>
            <person name="Fan W."/>
            <person name="Han B."/>
            <person name="Liu H."/>
            <person name="Zheng D."/>
            <person name="Li Q."/>
            <person name="Dong W."/>
            <person name="Yan J."/>
            <person name="Gao M."/>
            <person name="Berry C."/>
            <person name="Yuan Z."/>
        </authorList>
    </citation>
    <scope>NUCLEOTIDE SEQUENCE [LARGE SCALE GENOMIC DNA]</scope>
    <source>
        <strain>C3-41</strain>
    </source>
</reference>
<feature type="chain" id="PRO_1000145184" description="Urease accessory protein UreG">
    <location>
        <begin position="1"/>
        <end position="209"/>
    </location>
</feature>
<feature type="binding site" evidence="1">
    <location>
        <begin position="10"/>
        <end position="17"/>
    </location>
    <ligand>
        <name>GTP</name>
        <dbReference type="ChEBI" id="CHEBI:37565"/>
    </ligand>
</feature>